<feature type="chain" id="PRO_1000007212" description="Large ribosomal subunit protein bL28">
    <location>
        <begin position="1"/>
        <end position="63"/>
    </location>
</feature>
<dbReference type="EMBL" id="CP000727">
    <property type="protein sequence ID" value="ABS37728.1"/>
    <property type="molecule type" value="Genomic_DNA"/>
</dbReference>
<dbReference type="EMBL" id="AM412317">
    <property type="protein sequence ID" value="CAL84049.1"/>
    <property type="molecule type" value="Genomic_DNA"/>
</dbReference>
<dbReference type="RefSeq" id="WP_003395976.1">
    <property type="nucleotide sequence ID" value="NC_009698.1"/>
</dbReference>
<dbReference type="RefSeq" id="YP_001254993.1">
    <property type="nucleotide sequence ID" value="NC_009495.1"/>
</dbReference>
<dbReference type="RefSeq" id="YP_001388196.1">
    <property type="nucleotide sequence ID" value="NC_009698.1"/>
</dbReference>
<dbReference type="SMR" id="A5I4S6"/>
<dbReference type="GeneID" id="92939241"/>
<dbReference type="KEGG" id="cbh:CLC_2353"/>
<dbReference type="KEGG" id="cbo:CBO2499"/>
<dbReference type="PATRIC" id="fig|413999.7.peg.2476"/>
<dbReference type="HOGENOM" id="CLU_064548_7_0_9"/>
<dbReference type="PRO" id="PR:A5I4S6"/>
<dbReference type="Proteomes" id="UP000001986">
    <property type="component" value="Chromosome"/>
</dbReference>
<dbReference type="GO" id="GO:1990904">
    <property type="term" value="C:ribonucleoprotein complex"/>
    <property type="evidence" value="ECO:0007669"/>
    <property type="project" value="UniProtKB-KW"/>
</dbReference>
<dbReference type="GO" id="GO:0005840">
    <property type="term" value="C:ribosome"/>
    <property type="evidence" value="ECO:0007669"/>
    <property type="project" value="UniProtKB-KW"/>
</dbReference>
<dbReference type="GO" id="GO:0003735">
    <property type="term" value="F:structural constituent of ribosome"/>
    <property type="evidence" value="ECO:0007669"/>
    <property type="project" value="InterPro"/>
</dbReference>
<dbReference type="GO" id="GO:0006412">
    <property type="term" value="P:translation"/>
    <property type="evidence" value="ECO:0007669"/>
    <property type="project" value="UniProtKB-UniRule"/>
</dbReference>
<dbReference type="Gene3D" id="2.30.170.40">
    <property type="entry name" value="Ribosomal protein L28/L24"/>
    <property type="match status" value="1"/>
</dbReference>
<dbReference type="HAMAP" id="MF_00373">
    <property type="entry name" value="Ribosomal_bL28"/>
    <property type="match status" value="1"/>
</dbReference>
<dbReference type="InterPro" id="IPR050096">
    <property type="entry name" value="Bacterial_rp_bL28"/>
</dbReference>
<dbReference type="InterPro" id="IPR026569">
    <property type="entry name" value="Ribosomal_bL28"/>
</dbReference>
<dbReference type="InterPro" id="IPR034704">
    <property type="entry name" value="Ribosomal_bL28/bL31-like_sf"/>
</dbReference>
<dbReference type="InterPro" id="IPR001383">
    <property type="entry name" value="Ribosomal_bL28_bact-type"/>
</dbReference>
<dbReference type="InterPro" id="IPR037147">
    <property type="entry name" value="Ribosomal_bL28_sf"/>
</dbReference>
<dbReference type="NCBIfam" id="TIGR00009">
    <property type="entry name" value="L28"/>
    <property type="match status" value="1"/>
</dbReference>
<dbReference type="PANTHER" id="PTHR39080">
    <property type="entry name" value="50S RIBOSOMAL PROTEIN L28"/>
    <property type="match status" value="1"/>
</dbReference>
<dbReference type="PANTHER" id="PTHR39080:SF1">
    <property type="entry name" value="LARGE RIBOSOMAL SUBUNIT PROTEIN BL28A"/>
    <property type="match status" value="1"/>
</dbReference>
<dbReference type="Pfam" id="PF00830">
    <property type="entry name" value="Ribosomal_L28"/>
    <property type="match status" value="1"/>
</dbReference>
<dbReference type="SUPFAM" id="SSF143800">
    <property type="entry name" value="L28p-like"/>
    <property type="match status" value="1"/>
</dbReference>
<organism>
    <name type="scientific">Clostridium botulinum (strain Hall / ATCC 3502 / NCTC 13319 / Type A)</name>
    <dbReference type="NCBI Taxonomy" id="441771"/>
    <lineage>
        <taxon>Bacteria</taxon>
        <taxon>Bacillati</taxon>
        <taxon>Bacillota</taxon>
        <taxon>Clostridia</taxon>
        <taxon>Eubacteriales</taxon>
        <taxon>Clostridiaceae</taxon>
        <taxon>Clostridium</taxon>
    </lineage>
</organism>
<protein>
    <recommendedName>
        <fullName evidence="1">Large ribosomal subunit protein bL28</fullName>
    </recommendedName>
    <alternativeName>
        <fullName evidence="2">50S ribosomal protein L28</fullName>
    </alternativeName>
</protein>
<evidence type="ECO:0000255" key="1">
    <source>
        <dbReference type="HAMAP-Rule" id="MF_00373"/>
    </source>
</evidence>
<evidence type="ECO:0000305" key="2"/>
<name>RL28_CLOBH</name>
<gene>
    <name evidence="1" type="primary">rpmB</name>
    <name type="ordered locus">CBO2499</name>
    <name type="ordered locus">CLC_2353</name>
</gene>
<accession>A5I4S6</accession>
<accession>A7G5Y1</accession>
<proteinExistence type="inferred from homology"/>
<keyword id="KW-1185">Reference proteome</keyword>
<keyword id="KW-0687">Ribonucleoprotein</keyword>
<keyword id="KW-0689">Ribosomal protein</keyword>
<comment type="similarity">
    <text evidence="1">Belongs to the bacterial ribosomal protein bL28 family.</text>
</comment>
<reference key="1">
    <citation type="journal article" date="2007" name="Genome Res.">
        <title>Genome sequence of a proteolytic (Group I) Clostridium botulinum strain Hall A and comparative analysis of the clostridial genomes.</title>
        <authorList>
            <person name="Sebaihia M."/>
            <person name="Peck M.W."/>
            <person name="Minton N.P."/>
            <person name="Thomson N.R."/>
            <person name="Holden M.T.G."/>
            <person name="Mitchell W.J."/>
            <person name="Carter A.T."/>
            <person name="Bentley S.D."/>
            <person name="Mason D.R."/>
            <person name="Crossman L."/>
            <person name="Paul C.J."/>
            <person name="Ivens A."/>
            <person name="Wells-Bennik M.H.J."/>
            <person name="Davis I.J."/>
            <person name="Cerdeno-Tarraga A.M."/>
            <person name="Churcher C."/>
            <person name="Quail M.A."/>
            <person name="Chillingworth T."/>
            <person name="Feltwell T."/>
            <person name="Fraser A."/>
            <person name="Goodhead I."/>
            <person name="Hance Z."/>
            <person name="Jagels K."/>
            <person name="Larke N."/>
            <person name="Maddison M."/>
            <person name="Moule S."/>
            <person name="Mungall K."/>
            <person name="Norbertczak H."/>
            <person name="Rabbinowitsch E."/>
            <person name="Sanders M."/>
            <person name="Simmonds M."/>
            <person name="White B."/>
            <person name="Whithead S."/>
            <person name="Parkhill J."/>
        </authorList>
    </citation>
    <scope>NUCLEOTIDE SEQUENCE [LARGE SCALE GENOMIC DNA]</scope>
    <source>
        <strain>Hall / ATCC 3502 / NCTC 13319 / Type A</strain>
    </source>
</reference>
<reference key="2">
    <citation type="journal article" date="2007" name="PLoS ONE">
        <title>Analysis of the neurotoxin complex genes in Clostridium botulinum A1-A4 and B1 strains: BoNT/A3, /Ba4 and /B1 clusters are located within plasmids.</title>
        <authorList>
            <person name="Smith T.J."/>
            <person name="Hill K.K."/>
            <person name="Foley B.T."/>
            <person name="Detter J.C."/>
            <person name="Munk A.C."/>
            <person name="Bruce D.C."/>
            <person name="Doggett N.A."/>
            <person name="Smith L.A."/>
            <person name="Marks J.D."/>
            <person name="Xie G."/>
            <person name="Brettin T.S."/>
        </authorList>
    </citation>
    <scope>NUCLEOTIDE SEQUENCE [LARGE SCALE GENOMIC DNA]</scope>
    <source>
        <strain>Hall / ATCC 3502 / NCTC 13319 / Type A</strain>
    </source>
</reference>
<sequence>MSRKCEICGKGVVYGVQYSHSHRQSKRSFAPNIKRVKAIVNGTPKRVHVCTRCLRSGKVQRAI</sequence>